<name>DSBB_ECOLI</name>
<keyword id="KW-0002">3D-structure</keyword>
<keyword id="KW-0997">Cell inner membrane</keyword>
<keyword id="KW-1003">Cell membrane</keyword>
<keyword id="KW-0143">Chaperone</keyword>
<keyword id="KW-1015">Disulfide bond</keyword>
<keyword id="KW-0249">Electron transport</keyword>
<keyword id="KW-0472">Membrane</keyword>
<keyword id="KW-0560">Oxidoreductase</keyword>
<keyword id="KW-0676">Redox-active center</keyword>
<keyword id="KW-1185">Reference proteome</keyword>
<keyword id="KW-0812">Transmembrane</keyword>
<keyword id="KW-1133">Transmembrane helix</keyword>
<keyword id="KW-0813">Transport</keyword>
<proteinExistence type="evidence at protein level"/>
<dbReference type="EMBL" id="L03721">
    <property type="protein sequence ID" value="AAA23711.1"/>
    <property type="status" value="ALT_INIT"/>
    <property type="molecule type" value="Genomic_DNA"/>
</dbReference>
<dbReference type="EMBL" id="U00096">
    <property type="protein sequence ID" value="AAC74269.1"/>
    <property type="molecule type" value="Genomic_DNA"/>
</dbReference>
<dbReference type="EMBL" id="AP009048">
    <property type="protein sequence ID" value="BAA36032.2"/>
    <property type="molecule type" value="Genomic_DNA"/>
</dbReference>
<dbReference type="EMBL" id="M83655">
    <property type="protein sequence ID" value="AAA24220.1"/>
    <property type="status" value="ALT_FRAME"/>
    <property type="molecule type" value="Genomic_DNA"/>
</dbReference>
<dbReference type="PIR" id="F64864">
    <property type="entry name" value="F64864"/>
</dbReference>
<dbReference type="RefSeq" id="NP_415703.3">
    <property type="nucleotide sequence ID" value="NC_000913.3"/>
</dbReference>
<dbReference type="RefSeq" id="WP_000943459.1">
    <property type="nucleotide sequence ID" value="NZ_SSZK01000010.1"/>
</dbReference>
<dbReference type="PDB" id="2HI7">
    <property type="method" value="X-ray"/>
    <property type="resolution" value="3.70 A"/>
    <property type="chains" value="B=1-176"/>
</dbReference>
<dbReference type="PDB" id="2K73">
    <property type="method" value="NMR"/>
    <property type="chains" value="A=1-176"/>
</dbReference>
<dbReference type="PDB" id="2K74">
    <property type="method" value="NMR"/>
    <property type="chains" value="A=1-176"/>
</dbReference>
<dbReference type="PDB" id="2LEG">
    <property type="method" value="NMR"/>
    <property type="chains" value="B=1-176"/>
</dbReference>
<dbReference type="PDB" id="2LTQ">
    <property type="method" value="NMR"/>
    <property type="chains" value="A/D=1-176"/>
</dbReference>
<dbReference type="PDB" id="2ZUP">
    <property type="method" value="X-ray"/>
    <property type="resolution" value="3.70 A"/>
    <property type="chains" value="B=1-176"/>
</dbReference>
<dbReference type="PDB" id="2ZUQ">
    <property type="method" value="X-ray"/>
    <property type="resolution" value="3.30 A"/>
    <property type="chains" value="A/D=1-176"/>
</dbReference>
<dbReference type="PDB" id="3E9J">
    <property type="method" value="X-ray"/>
    <property type="resolution" value="3.70 A"/>
    <property type="chains" value="C/F=1-176"/>
</dbReference>
<dbReference type="PDB" id="6WVF">
    <property type="method" value="X-ray"/>
    <property type="resolution" value="2.90 A"/>
    <property type="chains" value="A=7-167"/>
</dbReference>
<dbReference type="PDBsum" id="2HI7"/>
<dbReference type="PDBsum" id="2K73"/>
<dbReference type="PDBsum" id="2K74"/>
<dbReference type="PDBsum" id="2LEG"/>
<dbReference type="PDBsum" id="2LTQ"/>
<dbReference type="PDBsum" id="2ZUP"/>
<dbReference type="PDBsum" id="2ZUQ"/>
<dbReference type="PDBsum" id="3E9J"/>
<dbReference type="PDBsum" id="6WVF"/>
<dbReference type="BMRB" id="P0A6M2"/>
<dbReference type="SMR" id="P0A6M2"/>
<dbReference type="BioGRID" id="4261815">
    <property type="interactions" value="428"/>
</dbReference>
<dbReference type="FunCoup" id="P0A6M2">
    <property type="interactions" value="105"/>
</dbReference>
<dbReference type="IntAct" id="P0A6M2">
    <property type="interactions" value="1"/>
</dbReference>
<dbReference type="MINT" id="P0A6M2"/>
<dbReference type="STRING" id="511145.b1185"/>
<dbReference type="BindingDB" id="P0A6M2"/>
<dbReference type="DrugBank" id="DB08689">
    <property type="generic name" value="Ubiquinone Q1"/>
</dbReference>
<dbReference type="DrugBank" id="DB08690">
    <property type="generic name" value="Ubiquinone Q2"/>
</dbReference>
<dbReference type="TCDB" id="5.A.2.1.1">
    <property type="family name" value="the disulfide bond oxidoreductase b (dsbb) family"/>
</dbReference>
<dbReference type="jPOST" id="P0A6M2"/>
<dbReference type="PaxDb" id="511145-b1185"/>
<dbReference type="ABCD" id="P0A6M2">
    <property type="antibodies" value="1 sequenced antibody"/>
</dbReference>
<dbReference type="EnsemblBacteria" id="AAC74269">
    <property type="protein sequence ID" value="AAC74269"/>
    <property type="gene ID" value="b1185"/>
</dbReference>
<dbReference type="GeneID" id="75203298"/>
<dbReference type="GeneID" id="946344"/>
<dbReference type="KEGG" id="ecj:JW5182"/>
<dbReference type="KEGG" id="eco:b1185"/>
<dbReference type="KEGG" id="ecoc:C3026_06980"/>
<dbReference type="PATRIC" id="fig|1411691.4.peg.1102"/>
<dbReference type="EchoBASE" id="EB1366"/>
<dbReference type="eggNOG" id="COG1495">
    <property type="taxonomic scope" value="Bacteria"/>
</dbReference>
<dbReference type="HOGENOM" id="CLU_098660_2_0_6"/>
<dbReference type="InParanoid" id="P0A6M2"/>
<dbReference type="OMA" id="GGALYMQ"/>
<dbReference type="OrthoDB" id="3711263at2"/>
<dbReference type="PhylomeDB" id="P0A6M2"/>
<dbReference type="BioCyc" id="EcoCyc:DSBBPROT-MONOMER"/>
<dbReference type="BioCyc" id="MetaCyc:DSBBPROT-MONOMER"/>
<dbReference type="BRENDA" id="1.8.5.9">
    <property type="organism ID" value="2026"/>
</dbReference>
<dbReference type="EvolutionaryTrace" id="P0A6M2"/>
<dbReference type="PRO" id="PR:P0A6M2"/>
<dbReference type="Proteomes" id="UP000000625">
    <property type="component" value="Chromosome"/>
</dbReference>
<dbReference type="GO" id="GO:0005886">
    <property type="term" value="C:plasma membrane"/>
    <property type="evidence" value="ECO:0000314"/>
    <property type="project" value="EcoCyc"/>
</dbReference>
<dbReference type="GO" id="GO:0009055">
    <property type="term" value="F:electron transfer activity"/>
    <property type="evidence" value="ECO:0007669"/>
    <property type="project" value="UniProtKB-UniRule"/>
</dbReference>
<dbReference type="GO" id="GO:0016672">
    <property type="term" value="F:oxidoreductase activity, acting on a sulfur group of donors, quinone or similar compound as acceptor"/>
    <property type="evidence" value="ECO:0000314"/>
    <property type="project" value="EcoCyc"/>
</dbReference>
<dbReference type="GO" id="GO:0015035">
    <property type="term" value="F:protein-disulfide reductase activity"/>
    <property type="evidence" value="ECO:0000315"/>
    <property type="project" value="EcoCyc"/>
</dbReference>
<dbReference type="GO" id="GO:0048039">
    <property type="term" value="F:ubiquinone binding"/>
    <property type="evidence" value="ECO:0000314"/>
    <property type="project" value="EcoCyc"/>
</dbReference>
<dbReference type="GO" id="GO:0006457">
    <property type="term" value="P:protein folding"/>
    <property type="evidence" value="ECO:0000318"/>
    <property type="project" value="GO_Central"/>
</dbReference>
<dbReference type="GO" id="GO:0009408">
    <property type="term" value="P:response to heat"/>
    <property type="evidence" value="ECO:0000315"/>
    <property type="project" value="EcoCyc"/>
</dbReference>
<dbReference type="FunFam" id="1.20.1550.10:FF:000001">
    <property type="entry name" value="Disulfide bond formation protein B"/>
    <property type="match status" value="1"/>
</dbReference>
<dbReference type="Gene3D" id="1.20.1550.10">
    <property type="entry name" value="DsbB-like"/>
    <property type="match status" value="1"/>
</dbReference>
<dbReference type="HAMAP" id="MF_00286">
    <property type="entry name" value="DsbB"/>
    <property type="match status" value="1"/>
</dbReference>
<dbReference type="InterPro" id="IPR003752">
    <property type="entry name" value="DiS_bond_form_DsbB/BdbC"/>
</dbReference>
<dbReference type="InterPro" id="IPR022920">
    <property type="entry name" value="Disulphide_bond_form_DsbB"/>
</dbReference>
<dbReference type="InterPro" id="IPR050183">
    <property type="entry name" value="DsbB"/>
</dbReference>
<dbReference type="InterPro" id="IPR023380">
    <property type="entry name" value="DsbB-like_sf"/>
</dbReference>
<dbReference type="NCBIfam" id="NF002485">
    <property type="entry name" value="PRK01749.1"/>
    <property type="match status" value="1"/>
</dbReference>
<dbReference type="PANTHER" id="PTHR36570">
    <property type="entry name" value="DISULFIDE BOND FORMATION PROTEIN B"/>
    <property type="match status" value="1"/>
</dbReference>
<dbReference type="PANTHER" id="PTHR36570:SF2">
    <property type="entry name" value="DISULFIDE BOND FORMATION PROTEIN B"/>
    <property type="match status" value="1"/>
</dbReference>
<dbReference type="Pfam" id="PF02600">
    <property type="entry name" value="DsbB"/>
    <property type="match status" value="1"/>
</dbReference>
<dbReference type="SUPFAM" id="SSF158442">
    <property type="entry name" value="DsbB-like"/>
    <property type="match status" value="1"/>
</dbReference>
<evidence type="ECO:0000269" key="1">
    <source>
    </source>
</evidence>
<evidence type="ECO:0000269" key="2">
    <source>
    </source>
</evidence>
<evidence type="ECO:0000269" key="3">
    <source>
    </source>
</evidence>
<evidence type="ECO:0000269" key="4">
    <source>
    </source>
</evidence>
<evidence type="ECO:0000269" key="5">
    <source>
    </source>
</evidence>
<evidence type="ECO:0000305" key="6"/>
<evidence type="ECO:0007829" key="7">
    <source>
        <dbReference type="PDB" id="2K73"/>
    </source>
</evidence>
<evidence type="ECO:0007829" key="8">
    <source>
        <dbReference type="PDB" id="2LEG"/>
    </source>
</evidence>
<evidence type="ECO:0007829" key="9">
    <source>
        <dbReference type="PDB" id="2LTQ"/>
    </source>
</evidence>
<evidence type="ECO:0007829" key="10">
    <source>
        <dbReference type="PDB" id="6WVF"/>
    </source>
</evidence>
<organism>
    <name type="scientific">Escherichia coli (strain K12)</name>
    <dbReference type="NCBI Taxonomy" id="83333"/>
    <lineage>
        <taxon>Bacteria</taxon>
        <taxon>Pseudomonadati</taxon>
        <taxon>Pseudomonadota</taxon>
        <taxon>Gammaproteobacteria</taxon>
        <taxon>Enterobacterales</taxon>
        <taxon>Enterobacteriaceae</taxon>
        <taxon>Escherichia</taxon>
    </lineage>
</organism>
<sequence>MLRFLNQCSQGRGAWLLMAFTALALELTALWFQHVMLLKPCVLCIYERCALFGVLGAALIGAIAPKTPLRYVAMVIWLYSAFRGVQLTYEHTMLQLYPSPFATCDFMVRFPEWLPLDKWVPQVFVASGDCAERQWDFLGLEMPQWLLGIFIAYLIVAVLVVISQPFKAKKRDLFGR</sequence>
<accession>P0A6M2</accession>
<accession>P30018</accession>
<accession>Q47408</accession>
<comment type="function">
    <text evidence="2 3 5">Required for disulfide bond formation in some periplasmic proteins such as PhoA or OmpA. Acts by oxidizing the DsbA protein. PhoP-regulated transcription is redox-sensitive, being activated when the periplasm becomes more reducing (deletion of dsbA/dsbB, treatment with dithiothreitol). MgrB acts between DsbA/DsbB and PhoP/PhoQ in this pathway.</text>
</comment>
<comment type="interaction">
    <interactant intactId="EBI-1170740">
        <id>P0A6M2</id>
    </interactant>
    <interactant intactId="EBI-549711">
        <id>P0AEG4</id>
        <label>dsbA</label>
    </interactant>
    <organismsDiffer>false</organismsDiffer>
    <experiments>5</experiments>
</comment>
<comment type="subcellular location">
    <subcellularLocation>
        <location evidence="4 5">Cell inner membrane</location>
        <topology evidence="4 5">Multi-pass membrane protein</topology>
    </subcellularLocation>
</comment>
<comment type="disruption phenotype">
    <text evidence="2">Induction of the PhoP/PhoQ two-component regulatory system.</text>
</comment>
<comment type="similarity">
    <text evidence="6">Belongs to the DsbB family.</text>
</comment>
<comment type="sequence caution" evidence="6">
    <conflict type="erroneous initiation">
        <sequence resource="EMBL-CDS" id="AAA23711"/>
    </conflict>
    <text>Extended N-terminus.</text>
</comment>
<comment type="sequence caution" evidence="6">
    <conflict type="frameshift">
        <sequence resource="EMBL-CDS" id="AAA24220"/>
    </conflict>
</comment>
<feature type="chain" id="PRO_0000059342" description="Disulfide bond formation protein B">
    <location>
        <begin position="1"/>
        <end position="176"/>
    </location>
</feature>
<feature type="topological domain" description="Cytoplasmic" evidence="6">
    <location>
        <begin position="1"/>
        <end position="14"/>
    </location>
</feature>
<feature type="transmembrane region" description="Helical" evidence="6">
    <location>
        <begin position="15"/>
        <end position="31"/>
    </location>
</feature>
<feature type="topological domain" description="Periplasmic" evidence="6">
    <location>
        <begin position="32"/>
        <end position="49"/>
    </location>
</feature>
<feature type="transmembrane region" description="Helical" evidence="6">
    <location>
        <begin position="50"/>
        <end position="65"/>
    </location>
</feature>
<feature type="topological domain" description="Cytoplasmic" evidence="6">
    <location>
        <begin position="66"/>
        <end position="71"/>
    </location>
</feature>
<feature type="transmembrane region" description="Helical" evidence="6">
    <location>
        <begin position="72"/>
        <end position="89"/>
    </location>
</feature>
<feature type="topological domain" description="Periplasmic" evidence="6">
    <location>
        <begin position="90"/>
        <end position="144"/>
    </location>
</feature>
<feature type="transmembrane region" description="Helical" evidence="6">
    <location>
        <begin position="145"/>
        <end position="163"/>
    </location>
</feature>
<feature type="topological domain" description="Cytoplasmic" evidence="6">
    <location>
        <begin position="164"/>
        <end position="176"/>
    </location>
</feature>
<feature type="disulfide bond" description="Redox-active" evidence="1">
    <location>
        <begin position="41"/>
        <end position="44"/>
    </location>
</feature>
<feature type="disulfide bond" description="Redox-active" evidence="1">
    <location>
        <begin position="104"/>
        <end position="130"/>
    </location>
</feature>
<feature type="helix" evidence="7">
    <location>
        <begin position="2"/>
        <end position="9"/>
    </location>
</feature>
<feature type="helix" evidence="10">
    <location>
        <begin position="13"/>
        <end position="34"/>
    </location>
</feature>
<feature type="helix" evidence="10">
    <location>
        <begin position="42"/>
        <end position="63"/>
    </location>
</feature>
<feature type="strand" evidence="8">
    <location>
        <begin position="66"/>
        <end position="69"/>
    </location>
</feature>
<feature type="helix" evidence="10">
    <location>
        <begin position="70"/>
        <end position="96"/>
    </location>
</feature>
<feature type="strand" evidence="10">
    <location>
        <begin position="101"/>
        <end position="103"/>
    </location>
</feature>
<feature type="helix" evidence="10">
    <location>
        <begin position="116"/>
        <end position="119"/>
    </location>
</feature>
<feature type="turn" evidence="10">
    <location>
        <begin position="121"/>
        <end position="123"/>
    </location>
</feature>
<feature type="strand" evidence="10">
    <location>
        <begin position="130"/>
        <end position="132"/>
    </location>
</feature>
<feature type="strand" evidence="9">
    <location>
        <begin position="138"/>
        <end position="140"/>
    </location>
</feature>
<feature type="helix" evidence="10">
    <location>
        <begin position="142"/>
        <end position="167"/>
    </location>
</feature>
<reference key="1">
    <citation type="journal article" date="1993" name="Proc. Natl. Acad. Sci. U.S.A.">
        <title>A pathway for disulfide bond formation in vivo.</title>
        <authorList>
            <person name="Bardwell J.C.A."/>
            <person name="Lee J.-O."/>
            <person name="Jander G."/>
            <person name="Martin N."/>
            <person name="Belin D."/>
            <person name="Beckwith J."/>
        </authorList>
    </citation>
    <scope>NUCLEOTIDE SEQUENCE [GENOMIC DNA]</scope>
    <scope>FUNCTION</scope>
    <scope>SUBCELLULAR LOCATION</scope>
</reference>
<reference key="2">
    <citation type="journal article" date="1993" name="Proc. Natl. Acad. Sci. U.S.A.">
        <title>Identification and characterization of the Escherichia coli gene dsbB, whose product is involved in the formation of disulfide bonds in vivo.</title>
        <authorList>
            <person name="Missiakas D."/>
            <person name="Georgopoulos C."/>
            <person name="Raina S."/>
        </authorList>
    </citation>
    <scope>NUCLEOTIDE SEQUENCE [GENOMIC DNA]</scope>
    <scope>FUNCTION</scope>
</reference>
<reference key="3">
    <citation type="journal article" date="1996" name="DNA Res.">
        <title>A 718-kb DNA sequence of the Escherichia coli K-12 genome corresponding to the 12.7-28.0 min region on the linkage map.</title>
        <authorList>
            <person name="Oshima T."/>
            <person name="Aiba H."/>
            <person name="Baba T."/>
            <person name="Fujita K."/>
            <person name="Hayashi K."/>
            <person name="Honjo A."/>
            <person name="Ikemoto K."/>
            <person name="Inada T."/>
            <person name="Itoh T."/>
            <person name="Kajihara M."/>
            <person name="Kanai K."/>
            <person name="Kashimoto K."/>
            <person name="Kimura S."/>
            <person name="Kitagawa M."/>
            <person name="Makino K."/>
            <person name="Masuda S."/>
            <person name="Miki T."/>
            <person name="Mizobuchi K."/>
            <person name="Mori H."/>
            <person name="Motomura K."/>
            <person name="Nakamura Y."/>
            <person name="Nashimoto H."/>
            <person name="Nishio Y."/>
            <person name="Saito N."/>
            <person name="Sampei G."/>
            <person name="Seki Y."/>
            <person name="Tagami H."/>
            <person name="Takemoto K."/>
            <person name="Wada C."/>
            <person name="Yamamoto Y."/>
            <person name="Yano M."/>
            <person name="Horiuchi T."/>
        </authorList>
    </citation>
    <scope>NUCLEOTIDE SEQUENCE [LARGE SCALE GENOMIC DNA]</scope>
    <source>
        <strain>K12 / W3110 / ATCC 27325 / DSM 5911</strain>
    </source>
</reference>
<reference key="4">
    <citation type="journal article" date="1997" name="Science">
        <title>The complete genome sequence of Escherichia coli K-12.</title>
        <authorList>
            <person name="Blattner F.R."/>
            <person name="Plunkett G. III"/>
            <person name="Bloch C.A."/>
            <person name="Perna N.T."/>
            <person name="Burland V."/>
            <person name="Riley M."/>
            <person name="Collado-Vides J."/>
            <person name="Glasner J.D."/>
            <person name="Rode C.K."/>
            <person name="Mayhew G.F."/>
            <person name="Gregor J."/>
            <person name="Davis N.W."/>
            <person name="Kirkpatrick H.A."/>
            <person name="Goeden M.A."/>
            <person name="Rose D.J."/>
            <person name="Mau B."/>
            <person name="Shao Y."/>
        </authorList>
    </citation>
    <scope>NUCLEOTIDE SEQUENCE [LARGE SCALE GENOMIC DNA]</scope>
    <source>
        <strain>K12 / MG1655 / ATCC 47076</strain>
    </source>
</reference>
<reference key="5">
    <citation type="journal article" date="2006" name="Mol. Syst. Biol.">
        <title>Highly accurate genome sequences of Escherichia coli K-12 strains MG1655 and W3110.</title>
        <authorList>
            <person name="Hayashi K."/>
            <person name="Morooka N."/>
            <person name="Yamamoto Y."/>
            <person name="Fujita K."/>
            <person name="Isono K."/>
            <person name="Choi S."/>
            <person name="Ohtsubo E."/>
            <person name="Baba T."/>
            <person name="Wanner B.L."/>
            <person name="Mori H."/>
            <person name="Horiuchi T."/>
        </authorList>
    </citation>
    <scope>NUCLEOTIDE SEQUENCE [LARGE SCALE GENOMIC DNA]</scope>
    <source>
        <strain>K12 / W3110 / ATCC 27325 / DSM 5911</strain>
    </source>
</reference>
<reference key="6">
    <citation type="journal article" date="1992" name="J. Biol. Chem.">
        <title>Cloning, sequencing, and expression of the nhaB gene, encoding a Na+/H+ antiporter in Escherichia coli.</title>
        <authorList>
            <person name="Pinner E."/>
            <person name="Padan E."/>
            <person name="Schuldiner S."/>
        </authorList>
    </citation>
    <scope>PRELIMINARY NUCLEOTIDE SEQUENCE [GENOMIC DNA] OF 1-169</scope>
    <source>
        <strain>K12</strain>
    </source>
</reference>
<reference key="7">
    <citation type="journal article" date="1994" name="EMBO J.">
        <title>Two cysteines in each periplasmic domain of the membrane protein DsbB are required for its function in protein disulfide bond formation.</title>
        <authorList>
            <person name="Jander G."/>
            <person name="Martin N.L."/>
            <person name="Beckwith J."/>
        </authorList>
    </citation>
    <scope>SUBCELLULAR LOCATION</scope>
    <scope>TOPOLOGY</scope>
    <scope>MUTAGENESIS OF CYSTEINE RESIDUES</scope>
</reference>
<reference key="8">
    <citation type="journal article" date="1999" name="EMBO J.">
        <title>Respiratory chain strongly oxidizes the CXXC motif of DsbB in the Escherichia coli disulfide bond formation pathway.</title>
        <authorList>
            <person name="Kobayashi T."/>
            <person name="Ito K."/>
        </authorList>
    </citation>
    <scope>REDOX-ACTIVE SITES</scope>
    <scope>DISULFIDE BONDS</scope>
</reference>
<reference key="9">
    <citation type="journal article" date="2005" name="Science">
        <title>Global topology analysis of the Escherichia coli inner membrane proteome.</title>
        <authorList>
            <person name="Daley D.O."/>
            <person name="Rapp M."/>
            <person name="Granseth E."/>
            <person name="Melen K."/>
            <person name="Drew D."/>
            <person name="von Heijne G."/>
        </authorList>
    </citation>
    <scope>TOPOLOGY [LARGE SCALE ANALYSIS]</scope>
    <source>
        <strain>K12 / MG1655 / ATCC 47076</strain>
    </source>
</reference>
<reference key="10">
    <citation type="journal article" date="2012" name="J. Bacteriol.">
        <title>Perturbation of the oxidizing environment of the periplasm stimulates the PhoQ/PhoP system in Escherichia coli.</title>
        <authorList>
            <person name="Lippa A.M."/>
            <person name="Goulian M."/>
        </authorList>
    </citation>
    <scope>FUNCTION IN PHOP/PHOQ REGULATION</scope>
    <scope>DISRUPTION PHENOTYPE</scope>
    <source>
        <strain>K12 / MG1655 / ATCC 47076</strain>
    </source>
</reference>
<gene>
    <name type="primary">dsbB</name>
    <name type="synonym">roxB</name>
    <name type="synonym">ycgA</name>
    <name type="ordered locus">b1185</name>
    <name type="ordered locus">JW5182</name>
</gene>
<protein>
    <recommendedName>
        <fullName>Disulfide bond formation protein B</fullName>
    </recommendedName>
    <alternativeName>
        <fullName>Disulfide oxidoreductase</fullName>
    </alternativeName>
</protein>